<name>ZAP1_CRYP1</name>
<gene>
    <name evidence="4" type="primary">ZAP1</name>
    <name type="ORF">M406DRAFT_281560</name>
</gene>
<proteinExistence type="evidence at transcript level"/>
<sequence length="388" mass="41250">MSGHLQAARPYGSPTSMHASLHMPEPNMGPSGMAFPSMAPELYAPPQPLRAPDATSQPAPKAYACSTCGKGFARRSDLARHERIHTGVRPHVCEYPNCGKQFIQRSALTVHQRVHTGEKPHMCERCGKPFSDSSSLARHRRIHSGKRPYKCPYADCQKTFTRRTTLTRHQNHHTGTVEDAARATAEVLARNSVARSASARPTRSEGDQISNHGSPLSTPSPAQRTMSMSPSAELAAANGMQHQYNGNSSLPAHMRTDLHSSSPAATTSSGFSSNVRPTSHPNAYGAAPPPTTLEPSIEGSQGPGSAVGSPHMSSVGWASPSHVASPAHSNSGGNSSYVYPDPDSSYPTNAAAQGQMFYSAAMGLQRPGSAEPGAQSAYKPRQNELWAA</sequence>
<feature type="chain" id="PRO_0000462155" description="C2H2-type transcription factor ZAP1">
    <location>
        <begin position="1"/>
        <end position="388"/>
    </location>
</feature>
<feature type="zinc finger region" description="C2H2-type 1" evidence="1">
    <location>
        <begin position="63"/>
        <end position="85"/>
    </location>
</feature>
<feature type="zinc finger region" description="C2H2-type 2" evidence="1">
    <location>
        <begin position="91"/>
        <end position="115"/>
    </location>
</feature>
<feature type="zinc finger region" description="C2H2-type 3" evidence="1">
    <location>
        <begin position="121"/>
        <end position="143"/>
    </location>
</feature>
<feature type="zinc finger region" description="C2H2-type 4" evidence="1">
    <location>
        <begin position="149"/>
        <end position="173"/>
    </location>
</feature>
<feature type="region of interest" description="Disordered" evidence="2">
    <location>
        <begin position="1"/>
        <end position="58"/>
    </location>
</feature>
<feature type="region of interest" description="Disordered" evidence="2">
    <location>
        <begin position="191"/>
        <end position="350"/>
    </location>
</feature>
<feature type="region of interest" description="Disordered" evidence="2">
    <location>
        <begin position="363"/>
        <end position="388"/>
    </location>
</feature>
<feature type="compositionally biased region" description="Low complexity" evidence="2">
    <location>
        <begin position="191"/>
        <end position="200"/>
    </location>
</feature>
<feature type="compositionally biased region" description="Polar residues" evidence="2">
    <location>
        <begin position="207"/>
        <end position="230"/>
    </location>
</feature>
<feature type="compositionally biased region" description="Polar residues" evidence="2">
    <location>
        <begin position="240"/>
        <end position="250"/>
    </location>
</feature>
<feature type="compositionally biased region" description="Polar residues" evidence="2">
    <location>
        <begin position="259"/>
        <end position="281"/>
    </location>
</feature>
<feature type="compositionally biased region" description="Low complexity" evidence="2">
    <location>
        <begin position="318"/>
        <end position="347"/>
    </location>
</feature>
<protein>
    <recommendedName>
        <fullName evidence="4">C2H2-type transcription factor ZAP1</fullName>
    </recommendedName>
</protein>
<organism>
    <name type="scientific">Cryphonectria parasitica (strain ATCC 38755 / EP155)</name>
    <dbReference type="NCBI Taxonomy" id="660469"/>
    <lineage>
        <taxon>Eukaryota</taxon>
        <taxon>Fungi</taxon>
        <taxon>Dikarya</taxon>
        <taxon>Ascomycota</taxon>
        <taxon>Pezizomycotina</taxon>
        <taxon>Sordariomycetes</taxon>
        <taxon>Sordariomycetidae</taxon>
        <taxon>Diaporthales</taxon>
        <taxon>Cryphonectriaceae</taxon>
        <taxon>Cryphonectria-Endothia species complex</taxon>
        <taxon>Cryphonectria</taxon>
    </lineage>
</organism>
<comment type="function">
    <text evidence="3">Transcription factor that plays an important role in C.parasitica development and virulence.</text>
</comment>
<comment type="subcellular location">
    <subcellularLocation>
        <location evidence="3">Nucleus</location>
    </subcellularLocation>
</comment>
<comment type="induction">
    <text evidence="3">Methylation at position A1935 within the 3'UTR of ZAP1 mRNA is regulated by both the MTA1 methyltransferase and zhe ALKBH demethylase, and controls its stability and subsequent translation.</text>
</comment>
<comment type="disruption phenotype">
    <text evidence="3">Leads to a slower growth rate and a significantly reduced sporulation (PubMed:39611846). Also significantly reduces virulence on chestnut stems and red Fuji apples (PubMed:39611846).</text>
</comment>
<comment type="similarity">
    <text evidence="5">Belongs to the krueppel C2H2-type zinc-finger protein family.</text>
</comment>
<dbReference type="EMBL" id="MU032351">
    <property type="protein sequence ID" value="KAF3761518.1"/>
    <property type="molecule type" value="Genomic_DNA"/>
</dbReference>
<dbReference type="Proteomes" id="UP000803844">
    <property type="component" value="Unassembled WGS sequence"/>
</dbReference>
<dbReference type="GO" id="GO:0000785">
    <property type="term" value="C:chromatin"/>
    <property type="evidence" value="ECO:0007669"/>
    <property type="project" value="TreeGrafter"/>
</dbReference>
<dbReference type="GO" id="GO:0005634">
    <property type="term" value="C:nucleus"/>
    <property type="evidence" value="ECO:0007669"/>
    <property type="project" value="UniProtKB-SubCell"/>
</dbReference>
<dbReference type="GO" id="GO:0005667">
    <property type="term" value="C:transcription regulator complex"/>
    <property type="evidence" value="ECO:0007669"/>
    <property type="project" value="TreeGrafter"/>
</dbReference>
<dbReference type="GO" id="GO:0000981">
    <property type="term" value="F:DNA-binding transcription factor activity, RNA polymerase II-specific"/>
    <property type="evidence" value="ECO:0007669"/>
    <property type="project" value="TreeGrafter"/>
</dbReference>
<dbReference type="GO" id="GO:0000978">
    <property type="term" value="F:RNA polymerase II cis-regulatory region sequence-specific DNA binding"/>
    <property type="evidence" value="ECO:0007669"/>
    <property type="project" value="TreeGrafter"/>
</dbReference>
<dbReference type="GO" id="GO:0008270">
    <property type="term" value="F:zinc ion binding"/>
    <property type="evidence" value="ECO:0007669"/>
    <property type="project" value="UniProtKB-KW"/>
</dbReference>
<dbReference type="FunFam" id="3.30.160.60:FF:000125">
    <property type="entry name" value="Putative zinc finger protein 143"/>
    <property type="match status" value="1"/>
</dbReference>
<dbReference type="FunFam" id="3.30.160.60:FF:000464">
    <property type="entry name" value="Zinc finger and SCAN domain containing 25"/>
    <property type="match status" value="1"/>
</dbReference>
<dbReference type="FunFam" id="3.30.160.60:FF:000690">
    <property type="entry name" value="Zinc finger protein 354C"/>
    <property type="match status" value="1"/>
</dbReference>
<dbReference type="Gene3D" id="3.30.160.60">
    <property type="entry name" value="Classic Zinc Finger"/>
    <property type="match status" value="4"/>
</dbReference>
<dbReference type="InterPro" id="IPR036236">
    <property type="entry name" value="Znf_C2H2_sf"/>
</dbReference>
<dbReference type="InterPro" id="IPR013087">
    <property type="entry name" value="Znf_C2H2_type"/>
</dbReference>
<dbReference type="PANTHER" id="PTHR14003:SF20">
    <property type="entry name" value="FINGER DOMAIN PROTEIN, PUTATIVE (AFU_ORTHOLOGUE AFUA_4G10380)-RELATED"/>
    <property type="match status" value="1"/>
</dbReference>
<dbReference type="PANTHER" id="PTHR14003">
    <property type="entry name" value="TRANSCRIPTIONAL REPRESSOR PROTEIN YY"/>
    <property type="match status" value="1"/>
</dbReference>
<dbReference type="Pfam" id="PF00096">
    <property type="entry name" value="zf-C2H2"/>
    <property type="match status" value="4"/>
</dbReference>
<dbReference type="SMART" id="SM00355">
    <property type="entry name" value="ZnF_C2H2"/>
    <property type="match status" value="4"/>
</dbReference>
<dbReference type="SUPFAM" id="SSF57667">
    <property type="entry name" value="beta-beta-alpha zinc fingers"/>
    <property type="match status" value="2"/>
</dbReference>
<dbReference type="PROSITE" id="PS00028">
    <property type="entry name" value="ZINC_FINGER_C2H2_1"/>
    <property type="match status" value="4"/>
</dbReference>
<dbReference type="PROSITE" id="PS50157">
    <property type="entry name" value="ZINC_FINGER_C2H2_2"/>
    <property type="match status" value="4"/>
</dbReference>
<accession>A0A9P4XV22</accession>
<reference key="1">
    <citation type="journal article" date="2020" name="Phytopathology">
        <title>Genome sequence of the chestnut blight fungus Cryphonectria parasitica EP155: A fundamental resource for an archetypical invasive plant pathogen.</title>
        <authorList>
            <person name="Crouch J.A."/>
            <person name="Dawe A."/>
            <person name="Aerts A."/>
            <person name="Barry K."/>
            <person name="Churchill A.C.L."/>
            <person name="Grimwood J."/>
            <person name="Hillman B."/>
            <person name="Milgroom M.G."/>
            <person name="Pangilinan J."/>
            <person name="Smith M."/>
            <person name="Salamov A."/>
            <person name="Schmutz J."/>
            <person name="Yadav J."/>
            <person name="Grigoriev I.V."/>
            <person name="Nuss D."/>
        </authorList>
    </citation>
    <scope>NUCLEOTIDE SEQUENCE [LARGE SCALE GENOMIC DNA]</scope>
    <source>
        <strain>ATCC 38755 / EP155</strain>
    </source>
</reference>
<reference key="2">
    <citation type="journal article" date="2025" name="MBio">
        <title>m6A demethylase CpALKBH regulates CpZap1 mRNA stability to modulate the development and virulence of chestnut blight fungus.</title>
        <authorList>
            <person name="Zhao L."/>
            <person name="Wei X."/>
            <person name="Chen F."/>
            <person name="Chen B."/>
            <person name="Li R."/>
        </authorList>
    </citation>
    <scope>FUNCTION</scope>
    <scope>SUBCELLULAR LOCATION</scope>
    <scope>INDUCTION</scope>
    <scope>DISRUPTION PHENOTYPE</scope>
</reference>
<evidence type="ECO:0000255" key="1">
    <source>
        <dbReference type="PROSITE-ProRule" id="PRU00042"/>
    </source>
</evidence>
<evidence type="ECO:0000256" key="2">
    <source>
        <dbReference type="SAM" id="MobiDB-lite"/>
    </source>
</evidence>
<evidence type="ECO:0000269" key="3">
    <source>
    </source>
</evidence>
<evidence type="ECO:0000303" key="4">
    <source>
    </source>
</evidence>
<evidence type="ECO:0000305" key="5"/>
<keyword id="KW-0479">Metal-binding</keyword>
<keyword id="KW-0539">Nucleus</keyword>
<keyword id="KW-1185">Reference proteome</keyword>
<keyword id="KW-0677">Repeat</keyword>
<keyword id="KW-0804">Transcription</keyword>
<keyword id="KW-0805">Transcription regulation</keyword>
<keyword id="KW-0843">Virulence</keyword>
<keyword id="KW-0862">Zinc</keyword>
<keyword id="KW-0863">Zinc-finger</keyword>